<accession>Q8NS12</accession>
<gene>
    <name evidence="1" type="primary">rpmE2</name>
    <name type="synonym">rpmE</name>
    <name type="ordered locus">Cgl0872</name>
    <name type="ordered locus">cg0994</name>
</gene>
<reference key="1">
    <citation type="journal article" date="2003" name="Appl. Microbiol. Biotechnol.">
        <title>The Corynebacterium glutamicum genome: features and impacts on biotechnological processes.</title>
        <authorList>
            <person name="Ikeda M."/>
            <person name="Nakagawa S."/>
        </authorList>
    </citation>
    <scope>NUCLEOTIDE SEQUENCE [LARGE SCALE GENOMIC DNA]</scope>
    <source>
        <strain>ATCC 13032 / DSM 20300 / JCM 1318 / BCRC 11384 / CCUG 27702 / LMG 3730 / NBRC 12168 / NCIMB 10025 / NRRL B-2784 / 534</strain>
    </source>
</reference>
<reference key="2">
    <citation type="journal article" date="2003" name="J. Biotechnol.">
        <title>The complete Corynebacterium glutamicum ATCC 13032 genome sequence and its impact on the production of L-aspartate-derived amino acids and vitamins.</title>
        <authorList>
            <person name="Kalinowski J."/>
            <person name="Bathe B."/>
            <person name="Bartels D."/>
            <person name="Bischoff N."/>
            <person name="Bott M."/>
            <person name="Burkovski A."/>
            <person name="Dusch N."/>
            <person name="Eggeling L."/>
            <person name="Eikmanns B.J."/>
            <person name="Gaigalat L."/>
            <person name="Goesmann A."/>
            <person name="Hartmann M."/>
            <person name="Huthmacher K."/>
            <person name="Kraemer R."/>
            <person name="Linke B."/>
            <person name="McHardy A.C."/>
            <person name="Meyer F."/>
            <person name="Moeckel B."/>
            <person name="Pfefferle W."/>
            <person name="Puehler A."/>
            <person name="Rey D.A."/>
            <person name="Rueckert C."/>
            <person name="Rupp O."/>
            <person name="Sahm H."/>
            <person name="Wendisch V.F."/>
            <person name="Wiegraebe I."/>
            <person name="Tauch A."/>
        </authorList>
    </citation>
    <scope>NUCLEOTIDE SEQUENCE [LARGE SCALE GENOMIC DNA]</scope>
    <source>
        <strain>ATCC 13032 / DSM 20300 / JCM 1318 / BCRC 11384 / CCUG 27702 / LMG 3730 / NBRC 12168 / NCIMB 10025 / NRRL B-2784 / 534</strain>
    </source>
</reference>
<feature type="chain" id="PRO_0000173221" description="Large ribosomal subunit protein bL31B">
    <location>
        <begin position="1"/>
        <end position="88"/>
    </location>
</feature>
<sequence>MKKDIHPDYHAVVFQDAGTGFQFLTKSTASSDRTVSWEDGNEYPLIVVDVTSESHPFWTGAQRVMDTAGRVEKFERRFGGMARRKKKA</sequence>
<organism>
    <name type="scientific">Corynebacterium glutamicum (strain ATCC 13032 / DSM 20300 / JCM 1318 / BCRC 11384 / CCUG 27702 / LMG 3730 / NBRC 12168 / NCIMB 10025 / NRRL B-2784 / 534)</name>
    <dbReference type="NCBI Taxonomy" id="196627"/>
    <lineage>
        <taxon>Bacteria</taxon>
        <taxon>Bacillati</taxon>
        <taxon>Actinomycetota</taxon>
        <taxon>Actinomycetes</taxon>
        <taxon>Mycobacteriales</taxon>
        <taxon>Corynebacteriaceae</taxon>
        <taxon>Corynebacterium</taxon>
    </lineage>
</organism>
<keyword id="KW-1185">Reference proteome</keyword>
<keyword id="KW-0687">Ribonucleoprotein</keyword>
<keyword id="KW-0689">Ribosomal protein</keyword>
<proteinExistence type="inferred from homology"/>
<evidence type="ECO:0000255" key="1">
    <source>
        <dbReference type="HAMAP-Rule" id="MF_00502"/>
    </source>
</evidence>
<evidence type="ECO:0000305" key="2"/>
<comment type="subunit">
    <text evidence="1">Part of the 50S ribosomal subunit.</text>
</comment>
<comment type="similarity">
    <text evidence="1">Belongs to the bacterial ribosomal protein bL31 family. Type B subfamily.</text>
</comment>
<dbReference type="EMBL" id="BA000036">
    <property type="protein sequence ID" value="BAB98265.1"/>
    <property type="molecule type" value="Genomic_DNA"/>
</dbReference>
<dbReference type="EMBL" id="BX927150">
    <property type="protein sequence ID" value="CAF19577.1"/>
    <property type="molecule type" value="Genomic_DNA"/>
</dbReference>
<dbReference type="RefSeq" id="NP_600100.1">
    <property type="nucleotide sequence ID" value="NC_003450.3"/>
</dbReference>
<dbReference type="RefSeq" id="WP_003858446.1">
    <property type="nucleotide sequence ID" value="NC_006958.1"/>
</dbReference>
<dbReference type="SMR" id="Q8NS12"/>
<dbReference type="STRING" id="196627.cg0994"/>
<dbReference type="KEGG" id="cgb:cg0994"/>
<dbReference type="KEGG" id="cgl:Cgl0872"/>
<dbReference type="PATRIC" id="fig|196627.13.peg.856"/>
<dbReference type="eggNOG" id="COG0254">
    <property type="taxonomic scope" value="Bacteria"/>
</dbReference>
<dbReference type="HOGENOM" id="CLU_114306_2_1_11"/>
<dbReference type="OrthoDB" id="9803251at2"/>
<dbReference type="BioCyc" id="CORYNE:G18NG-10442-MONOMER"/>
<dbReference type="Proteomes" id="UP000000582">
    <property type="component" value="Chromosome"/>
</dbReference>
<dbReference type="Proteomes" id="UP000001009">
    <property type="component" value="Chromosome"/>
</dbReference>
<dbReference type="GO" id="GO:1990904">
    <property type="term" value="C:ribonucleoprotein complex"/>
    <property type="evidence" value="ECO:0007669"/>
    <property type="project" value="UniProtKB-KW"/>
</dbReference>
<dbReference type="GO" id="GO:0005840">
    <property type="term" value="C:ribosome"/>
    <property type="evidence" value="ECO:0007669"/>
    <property type="project" value="UniProtKB-KW"/>
</dbReference>
<dbReference type="GO" id="GO:0003735">
    <property type="term" value="F:structural constituent of ribosome"/>
    <property type="evidence" value="ECO:0007669"/>
    <property type="project" value="InterPro"/>
</dbReference>
<dbReference type="GO" id="GO:0006412">
    <property type="term" value="P:translation"/>
    <property type="evidence" value="ECO:0007669"/>
    <property type="project" value="UniProtKB-UniRule"/>
</dbReference>
<dbReference type="Gene3D" id="4.10.830.30">
    <property type="entry name" value="Ribosomal protein L31"/>
    <property type="match status" value="1"/>
</dbReference>
<dbReference type="HAMAP" id="MF_00502">
    <property type="entry name" value="Ribosomal_bL31_2"/>
    <property type="match status" value="1"/>
</dbReference>
<dbReference type="InterPro" id="IPR034704">
    <property type="entry name" value="Ribosomal_bL28/bL31-like_sf"/>
</dbReference>
<dbReference type="InterPro" id="IPR002150">
    <property type="entry name" value="Ribosomal_bL31"/>
</dbReference>
<dbReference type="InterPro" id="IPR027493">
    <property type="entry name" value="Ribosomal_bL31_B"/>
</dbReference>
<dbReference type="InterPro" id="IPR042105">
    <property type="entry name" value="Ribosomal_bL31_sf"/>
</dbReference>
<dbReference type="NCBIfam" id="TIGR00105">
    <property type="entry name" value="L31"/>
    <property type="match status" value="1"/>
</dbReference>
<dbReference type="NCBIfam" id="NF002462">
    <property type="entry name" value="PRK01678.1"/>
    <property type="match status" value="1"/>
</dbReference>
<dbReference type="PANTHER" id="PTHR33280">
    <property type="entry name" value="50S RIBOSOMAL PROTEIN L31, CHLOROPLASTIC"/>
    <property type="match status" value="1"/>
</dbReference>
<dbReference type="PANTHER" id="PTHR33280:SF1">
    <property type="entry name" value="LARGE RIBOSOMAL SUBUNIT PROTEIN BL31C"/>
    <property type="match status" value="1"/>
</dbReference>
<dbReference type="Pfam" id="PF01197">
    <property type="entry name" value="Ribosomal_L31"/>
    <property type="match status" value="1"/>
</dbReference>
<dbReference type="PRINTS" id="PR01249">
    <property type="entry name" value="RIBOSOMALL31"/>
</dbReference>
<dbReference type="SUPFAM" id="SSF143800">
    <property type="entry name" value="L28p-like"/>
    <property type="match status" value="1"/>
</dbReference>
<dbReference type="PROSITE" id="PS01143">
    <property type="entry name" value="RIBOSOMAL_L31"/>
    <property type="match status" value="1"/>
</dbReference>
<protein>
    <recommendedName>
        <fullName evidence="1">Large ribosomal subunit protein bL31B</fullName>
    </recommendedName>
    <alternativeName>
        <fullName evidence="2">50S ribosomal protein L31 type B</fullName>
    </alternativeName>
</protein>
<name>RL31B_CORGL</name>